<keyword id="KW-0025">Alternative splicing</keyword>
<keyword id="KW-0238">DNA-binding</keyword>
<keyword id="KW-0479">Metal-binding</keyword>
<keyword id="KW-0539">Nucleus</keyword>
<keyword id="KW-1267">Proteomics identification</keyword>
<keyword id="KW-1185">Reference proteome</keyword>
<keyword id="KW-0677">Repeat</keyword>
<keyword id="KW-0678">Repressor</keyword>
<keyword id="KW-0804">Transcription</keyword>
<keyword id="KW-0805">Transcription regulation</keyword>
<keyword id="KW-0862">Zinc</keyword>
<keyword id="KW-0863">Zinc-finger</keyword>
<reference key="1">
    <citation type="journal article" date="1995" name="FEBS Lett.">
        <title>Repression of transcriptional activity by heterologous KRAB domains present in zinc finger proteins.</title>
        <authorList>
            <person name="Vissing H."/>
            <person name="Meyer W.-K."/>
            <person name="Aagaard L."/>
            <person name="Tommerup N."/>
            <person name="Thiesen H.-J."/>
        </authorList>
    </citation>
    <scope>NUCLEOTIDE SEQUENCE [MRNA] (ISOFORM 1)</scope>
    <source>
        <tissue>Insulinoma</tissue>
    </source>
</reference>
<reference key="2">
    <citation type="journal article" date="1995" name="Genomics">
        <title>Isolation and fine mapping of 16 novel human zinc finger-encoding cDNAs identify putative candidate genes for developmental and malignant disorders.</title>
        <authorList>
            <person name="Tommerup N."/>
            <person name="Vissing H."/>
        </authorList>
    </citation>
    <scope>NUCLEOTIDE SEQUENCE [MRNA] (ISOFORM 1)</scope>
    <source>
        <tissue>Insulinoma</tissue>
    </source>
</reference>
<reference key="3">
    <citation type="journal article" date="2004" name="Nat. Genet.">
        <title>Complete sequencing and characterization of 21,243 full-length human cDNAs.</title>
        <authorList>
            <person name="Ota T."/>
            <person name="Suzuki Y."/>
            <person name="Nishikawa T."/>
            <person name="Otsuki T."/>
            <person name="Sugiyama T."/>
            <person name="Irie R."/>
            <person name="Wakamatsu A."/>
            <person name="Hayashi K."/>
            <person name="Sato H."/>
            <person name="Nagai K."/>
            <person name="Kimura K."/>
            <person name="Makita H."/>
            <person name="Sekine M."/>
            <person name="Obayashi M."/>
            <person name="Nishi T."/>
            <person name="Shibahara T."/>
            <person name="Tanaka T."/>
            <person name="Ishii S."/>
            <person name="Yamamoto J."/>
            <person name="Saito K."/>
            <person name="Kawai Y."/>
            <person name="Isono Y."/>
            <person name="Nakamura Y."/>
            <person name="Nagahari K."/>
            <person name="Murakami K."/>
            <person name="Yasuda T."/>
            <person name="Iwayanagi T."/>
            <person name="Wagatsuma M."/>
            <person name="Shiratori A."/>
            <person name="Sudo H."/>
            <person name="Hosoiri T."/>
            <person name="Kaku Y."/>
            <person name="Kodaira H."/>
            <person name="Kondo H."/>
            <person name="Sugawara M."/>
            <person name="Takahashi M."/>
            <person name="Kanda K."/>
            <person name="Yokoi T."/>
            <person name="Furuya T."/>
            <person name="Kikkawa E."/>
            <person name="Omura Y."/>
            <person name="Abe K."/>
            <person name="Kamihara K."/>
            <person name="Katsuta N."/>
            <person name="Sato K."/>
            <person name="Tanikawa M."/>
            <person name="Yamazaki M."/>
            <person name="Ninomiya K."/>
            <person name="Ishibashi T."/>
            <person name="Yamashita H."/>
            <person name="Murakawa K."/>
            <person name="Fujimori K."/>
            <person name="Tanai H."/>
            <person name="Kimata M."/>
            <person name="Watanabe M."/>
            <person name="Hiraoka S."/>
            <person name="Chiba Y."/>
            <person name="Ishida S."/>
            <person name="Ono Y."/>
            <person name="Takiguchi S."/>
            <person name="Watanabe S."/>
            <person name="Yosida M."/>
            <person name="Hotuta T."/>
            <person name="Kusano J."/>
            <person name="Kanehori K."/>
            <person name="Takahashi-Fujii A."/>
            <person name="Hara H."/>
            <person name="Tanase T.-O."/>
            <person name="Nomura Y."/>
            <person name="Togiya S."/>
            <person name="Komai F."/>
            <person name="Hara R."/>
            <person name="Takeuchi K."/>
            <person name="Arita M."/>
            <person name="Imose N."/>
            <person name="Musashino K."/>
            <person name="Yuuki H."/>
            <person name="Oshima A."/>
            <person name="Sasaki N."/>
            <person name="Aotsuka S."/>
            <person name="Yoshikawa Y."/>
            <person name="Matsunawa H."/>
            <person name="Ichihara T."/>
            <person name="Shiohata N."/>
            <person name="Sano S."/>
            <person name="Moriya S."/>
            <person name="Momiyama H."/>
            <person name="Satoh N."/>
            <person name="Takami S."/>
            <person name="Terashima Y."/>
            <person name="Suzuki O."/>
            <person name="Nakagawa S."/>
            <person name="Senoh A."/>
            <person name="Mizoguchi H."/>
            <person name="Goto Y."/>
            <person name="Shimizu F."/>
            <person name="Wakebe H."/>
            <person name="Hishigaki H."/>
            <person name="Watanabe T."/>
            <person name="Sugiyama A."/>
            <person name="Takemoto M."/>
            <person name="Kawakami B."/>
            <person name="Yamazaki M."/>
            <person name="Watanabe K."/>
            <person name="Kumagai A."/>
            <person name="Itakura S."/>
            <person name="Fukuzumi Y."/>
            <person name="Fujimori Y."/>
            <person name="Komiyama M."/>
            <person name="Tashiro H."/>
            <person name="Tanigami A."/>
            <person name="Fujiwara T."/>
            <person name="Ono T."/>
            <person name="Yamada K."/>
            <person name="Fujii Y."/>
            <person name="Ozaki K."/>
            <person name="Hirao M."/>
            <person name="Ohmori Y."/>
            <person name="Kawabata A."/>
            <person name="Hikiji T."/>
            <person name="Kobatake N."/>
            <person name="Inagaki H."/>
            <person name="Ikema Y."/>
            <person name="Okamoto S."/>
            <person name="Okitani R."/>
            <person name="Kawakami T."/>
            <person name="Noguchi S."/>
            <person name="Itoh T."/>
            <person name="Shigeta K."/>
            <person name="Senba T."/>
            <person name="Matsumura K."/>
            <person name="Nakajima Y."/>
            <person name="Mizuno T."/>
            <person name="Morinaga M."/>
            <person name="Sasaki M."/>
            <person name="Togashi T."/>
            <person name="Oyama M."/>
            <person name="Hata H."/>
            <person name="Watanabe M."/>
            <person name="Komatsu T."/>
            <person name="Mizushima-Sugano J."/>
            <person name="Satoh T."/>
            <person name="Shirai Y."/>
            <person name="Takahashi Y."/>
            <person name="Nakagawa K."/>
            <person name="Okumura K."/>
            <person name="Nagase T."/>
            <person name="Nomura N."/>
            <person name="Kikuchi H."/>
            <person name="Masuho Y."/>
            <person name="Yamashita R."/>
            <person name="Nakai K."/>
            <person name="Yada T."/>
            <person name="Nakamura Y."/>
            <person name="Ohara O."/>
            <person name="Isogai T."/>
            <person name="Sugano S."/>
        </authorList>
    </citation>
    <scope>NUCLEOTIDE SEQUENCE [LARGE SCALE MRNA] (ISOFORMS 1 AND 2)</scope>
    <source>
        <tissue>Thymus</tissue>
    </source>
</reference>
<reference key="4">
    <citation type="journal article" date="2006" name="Nature">
        <title>The finished DNA sequence of human chromosome 12.</title>
        <authorList>
            <person name="Scherer S.E."/>
            <person name="Muzny D.M."/>
            <person name="Buhay C.J."/>
            <person name="Chen R."/>
            <person name="Cree A."/>
            <person name="Ding Y."/>
            <person name="Dugan-Rocha S."/>
            <person name="Gill R."/>
            <person name="Gunaratne P."/>
            <person name="Harris R.A."/>
            <person name="Hawes A.C."/>
            <person name="Hernandez J."/>
            <person name="Hodgson A.V."/>
            <person name="Hume J."/>
            <person name="Jackson A."/>
            <person name="Khan Z.M."/>
            <person name="Kovar-Smith C."/>
            <person name="Lewis L.R."/>
            <person name="Lozado R.J."/>
            <person name="Metzker M.L."/>
            <person name="Milosavljevic A."/>
            <person name="Miner G.R."/>
            <person name="Montgomery K.T."/>
            <person name="Morgan M.B."/>
            <person name="Nazareth L.V."/>
            <person name="Scott G."/>
            <person name="Sodergren E."/>
            <person name="Song X.-Z."/>
            <person name="Steffen D."/>
            <person name="Lovering R.C."/>
            <person name="Wheeler D.A."/>
            <person name="Worley K.C."/>
            <person name="Yuan Y."/>
            <person name="Zhang Z."/>
            <person name="Adams C.Q."/>
            <person name="Ansari-Lari M.A."/>
            <person name="Ayele M."/>
            <person name="Brown M.J."/>
            <person name="Chen G."/>
            <person name="Chen Z."/>
            <person name="Clerc-Blankenburg K.P."/>
            <person name="Davis C."/>
            <person name="Delgado O."/>
            <person name="Dinh H.H."/>
            <person name="Draper H."/>
            <person name="Gonzalez-Garay M.L."/>
            <person name="Havlak P."/>
            <person name="Jackson L.R."/>
            <person name="Jacob L.S."/>
            <person name="Kelly S.H."/>
            <person name="Li L."/>
            <person name="Li Z."/>
            <person name="Liu J."/>
            <person name="Liu W."/>
            <person name="Lu J."/>
            <person name="Maheshwari M."/>
            <person name="Nguyen B.-V."/>
            <person name="Okwuonu G.O."/>
            <person name="Pasternak S."/>
            <person name="Perez L.M."/>
            <person name="Plopper F.J.H."/>
            <person name="Santibanez J."/>
            <person name="Shen H."/>
            <person name="Tabor P.E."/>
            <person name="Verduzco D."/>
            <person name="Waldron L."/>
            <person name="Wang Q."/>
            <person name="Williams G.A."/>
            <person name="Zhang J."/>
            <person name="Zhou J."/>
            <person name="Allen C.C."/>
            <person name="Amin A.G."/>
            <person name="Anyalebechi V."/>
            <person name="Bailey M."/>
            <person name="Barbaria J.A."/>
            <person name="Bimage K.E."/>
            <person name="Bryant N.P."/>
            <person name="Burch P.E."/>
            <person name="Burkett C.E."/>
            <person name="Burrell K.L."/>
            <person name="Calderon E."/>
            <person name="Cardenas V."/>
            <person name="Carter K."/>
            <person name="Casias K."/>
            <person name="Cavazos I."/>
            <person name="Cavazos S.R."/>
            <person name="Ceasar H."/>
            <person name="Chacko J."/>
            <person name="Chan S.N."/>
            <person name="Chavez D."/>
            <person name="Christopoulos C."/>
            <person name="Chu J."/>
            <person name="Cockrell R."/>
            <person name="Cox C.D."/>
            <person name="Dang M."/>
            <person name="Dathorne S.R."/>
            <person name="David R."/>
            <person name="Davis C.M."/>
            <person name="Davy-Carroll L."/>
            <person name="Deshazo D.R."/>
            <person name="Donlin J.E."/>
            <person name="D'Souza L."/>
            <person name="Eaves K.A."/>
            <person name="Egan A."/>
            <person name="Emery-Cohen A.J."/>
            <person name="Escotto M."/>
            <person name="Flagg N."/>
            <person name="Forbes L.D."/>
            <person name="Gabisi A.M."/>
            <person name="Garza M."/>
            <person name="Hamilton C."/>
            <person name="Henderson N."/>
            <person name="Hernandez O."/>
            <person name="Hines S."/>
            <person name="Hogues M.E."/>
            <person name="Huang M."/>
            <person name="Idlebird D.G."/>
            <person name="Johnson R."/>
            <person name="Jolivet A."/>
            <person name="Jones S."/>
            <person name="Kagan R."/>
            <person name="King L.M."/>
            <person name="Leal B."/>
            <person name="Lebow H."/>
            <person name="Lee S."/>
            <person name="LeVan J.M."/>
            <person name="Lewis L.C."/>
            <person name="London P."/>
            <person name="Lorensuhewa L.M."/>
            <person name="Loulseged H."/>
            <person name="Lovett D.A."/>
            <person name="Lucier A."/>
            <person name="Lucier R.L."/>
            <person name="Ma J."/>
            <person name="Madu R.C."/>
            <person name="Mapua P."/>
            <person name="Martindale A.D."/>
            <person name="Martinez E."/>
            <person name="Massey E."/>
            <person name="Mawhiney S."/>
            <person name="Meador M.G."/>
            <person name="Mendez S."/>
            <person name="Mercado C."/>
            <person name="Mercado I.C."/>
            <person name="Merritt C.E."/>
            <person name="Miner Z.L."/>
            <person name="Minja E."/>
            <person name="Mitchell T."/>
            <person name="Mohabbat F."/>
            <person name="Mohabbat K."/>
            <person name="Montgomery B."/>
            <person name="Moore N."/>
            <person name="Morris S."/>
            <person name="Munidasa M."/>
            <person name="Ngo R.N."/>
            <person name="Nguyen N.B."/>
            <person name="Nickerson E."/>
            <person name="Nwaokelemeh O.O."/>
            <person name="Nwokenkwo S."/>
            <person name="Obregon M."/>
            <person name="Oguh M."/>
            <person name="Oragunye N."/>
            <person name="Oviedo R.J."/>
            <person name="Parish B.J."/>
            <person name="Parker D.N."/>
            <person name="Parrish J."/>
            <person name="Parks K.L."/>
            <person name="Paul H.A."/>
            <person name="Payton B.A."/>
            <person name="Perez A."/>
            <person name="Perrin W."/>
            <person name="Pickens A."/>
            <person name="Primus E.L."/>
            <person name="Pu L.-L."/>
            <person name="Puazo M."/>
            <person name="Quiles M.M."/>
            <person name="Quiroz J.B."/>
            <person name="Rabata D."/>
            <person name="Reeves K."/>
            <person name="Ruiz S.J."/>
            <person name="Shao H."/>
            <person name="Sisson I."/>
            <person name="Sonaike T."/>
            <person name="Sorelle R.P."/>
            <person name="Sutton A.E."/>
            <person name="Svatek A.F."/>
            <person name="Svetz L.A."/>
            <person name="Tamerisa K.S."/>
            <person name="Taylor T.R."/>
            <person name="Teague B."/>
            <person name="Thomas N."/>
            <person name="Thorn R.D."/>
            <person name="Trejos Z.Y."/>
            <person name="Trevino B.K."/>
            <person name="Ukegbu O.N."/>
            <person name="Urban J.B."/>
            <person name="Vasquez L.I."/>
            <person name="Vera V.A."/>
            <person name="Villasana D.M."/>
            <person name="Wang L."/>
            <person name="Ward-Moore S."/>
            <person name="Warren J.T."/>
            <person name="Wei X."/>
            <person name="White F."/>
            <person name="Williamson A.L."/>
            <person name="Wleczyk R."/>
            <person name="Wooden H.S."/>
            <person name="Wooden S.H."/>
            <person name="Yen J."/>
            <person name="Yoon L."/>
            <person name="Yoon V."/>
            <person name="Zorrilla S.E."/>
            <person name="Nelson D."/>
            <person name="Kucherlapati R."/>
            <person name="Weinstock G."/>
            <person name="Gibbs R.A."/>
        </authorList>
    </citation>
    <scope>NUCLEOTIDE SEQUENCE [LARGE SCALE GENOMIC DNA]</scope>
</reference>
<reference key="5">
    <citation type="submission" date="2005-09" db="EMBL/GenBank/DDBJ databases">
        <authorList>
            <person name="Mural R.J."/>
            <person name="Istrail S."/>
            <person name="Sutton G.G."/>
            <person name="Florea L."/>
            <person name="Halpern A.L."/>
            <person name="Mobarry C.M."/>
            <person name="Lippert R."/>
            <person name="Walenz B."/>
            <person name="Shatkay H."/>
            <person name="Dew I."/>
            <person name="Miller J.R."/>
            <person name="Flanigan M.J."/>
            <person name="Edwards N.J."/>
            <person name="Bolanos R."/>
            <person name="Fasulo D."/>
            <person name="Halldorsson B.V."/>
            <person name="Hannenhalli S."/>
            <person name="Turner R."/>
            <person name="Yooseph S."/>
            <person name="Lu F."/>
            <person name="Nusskern D.R."/>
            <person name="Shue B.C."/>
            <person name="Zheng X.H."/>
            <person name="Zhong F."/>
            <person name="Delcher A.L."/>
            <person name="Huson D.H."/>
            <person name="Kravitz S.A."/>
            <person name="Mouchard L."/>
            <person name="Reinert K."/>
            <person name="Remington K.A."/>
            <person name="Clark A.G."/>
            <person name="Waterman M.S."/>
            <person name="Eichler E.E."/>
            <person name="Adams M.D."/>
            <person name="Hunkapiller M.W."/>
            <person name="Myers E.W."/>
            <person name="Venter J.C."/>
        </authorList>
    </citation>
    <scope>NUCLEOTIDE SEQUENCE [LARGE SCALE GENOMIC DNA]</scope>
</reference>
<reference key="6">
    <citation type="journal article" date="2004" name="Genome Res.">
        <title>The status, quality, and expansion of the NIH full-length cDNA project: the Mammalian Gene Collection (MGC).</title>
        <authorList>
            <consortium name="The MGC Project Team"/>
        </authorList>
    </citation>
    <scope>NUCLEOTIDE SEQUENCE [LARGE SCALE MRNA] (ISOFORMS 1 AND 2)</scope>
    <source>
        <tissue>Testis</tissue>
    </source>
</reference>
<gene>
    <name type="primary">ZNF140</name>
</gene>
<comment type="function">
    <text>May be involved in transcriptional regulation as a repressor.</text>
</comment>
<comment type="interaction">
    <interactant intactId="EBI-12069140">
        <id>P52738</id>
    </interactant>
    <interactant intactId="EBI-742909">
        <id>Q9H6L4</id>
        <label>ARMC7</label>
    </interactant>
    <organismsDiffer>false</organismsDiffer>
    <experiments>3</experiments>
</comment>
<comment type="interaction">
    <interactant intactId="EBI-12069140">
        <id>P52738</id>
    </interactant>
    <interactant intactId="EBI-12011224">
        <id>Q9NPB3</id>
        <label>CABP2</label>
    </interactant>
    <organismsDiffer>false</organismsDiffer>
    <experiments>3</experiments>
</comment>
<comment type="interaction">
    <interactant intactId="EBI-12069140">
        <id>P52738</id>
    </interactant>
    <interactant intactId="EBI-739624">
        <id>Q8NHQ1</id>
        <label>CEP70</label>
    </interactant>
    <organismsDiffer>false</organismsDiffer>
    <experiments>3</experiments>
</comment>
<comment type="subcellular location">
    <subcellularLocation>
        <location evidence="5">Nucleus</location>
    </subcellularLocation>
</comment>
<comment type="alternative products">
    <event type="alternative splicing"/>
    <isoform>
        <id>P52738-1</id>
        <name>1</name>
        <sequence type="displayed"/>
    </isoform>
    <isoform>
        <id>P52738-2</id>
        <name>2</name>
        <sequence type="described" ref="VSP_056436"/>
    </isoform>
</comment>
<comment type="tissue specificity">
    <text>Seems ubiquitous. Seen in the heart, brain, placenta, lung, liver, skeletal muscle, kidney and pancreas.</text>
</comment>
<comment type="similarity">
    <text evidence="5">Belongs to the krueppel C2H2-type zinc-finger protein family.</text>
</comment>
<dbReference type="EMBL" id="U09368">
    <property type="protein sequence ID" value="AAC50262.1"/>
    <property type="molecule type" value="mRNA"/>
</dbReference>
<dbReference type="EMBL" id="AK122741">
    <property type="protein sequence ID" value="BAG53698.1"/>
    <property type="molecule type" value="mRNA"/>
</dbReference>
<dbReference type="EMBL" id="AK303240">
    <property type="protein sequence ID" value="BAG64326.1"/>
    <property type="molecule type" value="mRNA"/>
</dbReference>
<dbReference type="EMBL" id="AC026786">
    <property type="status" value="NOT_ANNOTATED_CDS"/>
    <property type="molecule type" value="Genomic_DNA"/>
</dbReference>
<dbReference type="EMBL" id="AC073911">
    <property type="status" value="NOT_ANNOTATED_CDS"/>
    <property type="molecule type" value="Genomic_DNA"/>
</dbReference>
<dbReference type="EMBL" id="CH471218">
    <property type="protein sequence ID" value="EAW54795.1"/>
    <property type="molecule type" value="Genomic_DNA"/>
</dbReference>
<dbReference type="EMBL" id="CH471218">
    <property type="protein sequence ID" value="EAW54797.1"/>
    <property type="molecule type" value="Genomic_DNA"/>
</dbReference>
<dbReference type="EMBL" id="CH471218">
    <property type="protein sequence ID" value="EAW54798.1"/>
    <property type="molecule type" value="Genomic_DNA"/>
</dbReference>
<dbReference type="EMBL" id="BC022291">
    <property type="protein sequence ID" value="AAH22291.1"/>
    <property type="molecule type" value="mRNA"/>
</dbReference>
<dbReference type="EMBL" id="BC040561">
    <property type="protein sequence ID" value="AAH40561.1"/>
    <property type="molecule type" value="mRNA"/>
</dbReference>
<dbReference type="CCDS" id="CCDS73550.1">
    <molecule id="P52738-2"/>
</dbReference>
<dbReference type="CCDS" id="CCDS9282.1">
    <molecule id="P52738-1"/>
</dbReference>
<dbReference type="PIR" id="C57785">
    <property type="entry name" value="C57785"/>
</dbReference>
<dbReference type="RefSeq" id="NP_001287705.1">
    <molecule id="P52738-2"/>
    <property type="nucleotide sequence ID" value="NM_001300776.2"/>
</dbReference>
<dbReference type="RefSeq" id="NP_001287706.1">
    <property type="nucleotide sequence ID" value="NM_001300777.1"/>
</dbReference>
<dbReference type="RefSeq" id="NP_001287707.1">
    <molecule id="P52738-2"/>
    <property type="nucleotide sequence ID" value="NM_001300778.2"/>
</dbReference>
<dbReference type="RefSeq" id="NP_003431.2">
    <molecule id="P52738-1"/>
    <property type="nucleotide sequence ID" value="NM_003440.3"/>
</dbReference>
<dbReference type="RefSeq" id="XP_011533137.1">
    <molecule id="P52738-1"/>
    <property type="nucleotide sequence ID" value="XM_011534835.4"/>
</dbReference>
<dbReference type="RefSeq" id="XP_011533142.1">
    <property type="nucleotide sequence ID" value="XM_011534840.2"/>
</dbReference>
<dbReference type="RefSeq" id="XP_016875413.1">
    <property type="nucleotide sequence ID" value="XM_017019924.1"/>
</dbReference>
<dbReference type="RefSeq" id="XP_016875414.1">
    <property type="nucleotide sequence ID" value="XM_017019925.1"/>
</dbReference>
<dbReference type="RefSeq" id="XP_054229121.1">
    <molecule id="P52738-1"/>
    <property type="nucleotide sequence ID" value="XM_054373146.1"/>
</dbReference>
<dbReference type="RefSeq" id="XP_054229122.1">
    <molecule id="P52738-1"/>
    <property type="nucleotide sequence ID" value="XM_054373147.1"/>
</dbReference>
<dbReference type="SMR" id="P52738"/>
<dbReference type="BioGRID" id="113493">
    <property type="interactions" value="9"/>
</dbReference>
<dbReference type="FunCoup" id="P52738">
    <property type="interactions" value="186"/>
</dbReference>
<dbReference type="IntAct" id="P52738">
    <property type="interactions" value="6"/>
</dbReference>
<dbReference type="STRING" id="9606.ENSP00000347755"/>
<dbReference type="iPTMnet" id="P52738"/>
<dbReference type="PhosphoSitePlus" id="P52738"/>
<dbReference type="BioMuta" id="ZNF140"/>
<dbReference type="DMDM" id="206729944"/>
<dbReference type="jPOST" id="P52738"/>
<dbReference type="MassIVE" id="P52738"/>
<dbReference type="PaxDb" id="9606-ENSP00000347755"/>
<dbReference type="PeptideAtlas" id="P52738"/>
<dbReference type="ProteomicsDB" id="56511">
    <molecule id="P52738-1"/>
</dbReference>
<dbReference type="ProteomicsDB" id="58394"/>
<dbReference type="Pumba" id="P52738"/>
<dbReference type="Antibodypedia" id="45872">
    <property type="antibodies" value="51 antibodies from 18 providers"/>
</dbReference>
<dbReference type="DNASU" id="7699"/>
<dbReference type="Ensembl" id="ENST00000355557.7">
    <molecule id="P52738-1"/>
    <property type="protein sequence ID" value="ENSP00000347755.2"/>
    <property type="gene ID" value="ENSG00000196387.10"/>
</dbReference>
<dbReference type="Ensembl" id="ENST00000544426.5">
    <molecule id="P52738-2"/>
    <property type="protein sequence ID" value="ENSP00000445411.1"/>
    <property type="gene ID" value="ENSG00000196387.10"/>
</dbReference>
<dbReference type="GeneID" id="7699"/>
<dbReference type="KEGG" id="hsa:7699"/>
<dbReference type="MANE-Select" id="ENST00000355557.7">
    <property type="protein sequence ID" value="ENSP00000347755.2"/>
    <property type="RefSeq nucleotide sequence ID" value="NM_003440.4"/>
    <property type="RefSeq protein sequence ID" value="NP_003431.2"/>
</dbReference>
<dbReference type="UCSC" id="uc001ulo.4">
    <molecule id="P52738-1"/>
    <property type="organism name" value="human"/>
</dbReference>
<dbReference type="AGR" id="HGNC:12925"/>
<dbReference type="CTD" id="7699"/>
<dbReference type="DisGeNET" id="7699"/>
<dbReference type="GeneCards" id="ZNF140"/>
<dbReference type="HGNC" id="HGNC:12925">
    <property type="gene designation" value="ZNF140"/>
</dbReference>
<dbReference type="HPA" id="ENSG00000196387">
    <property type="expression patterns" value="Low tissue specificity"/>
</dbReference>
<dbReference type="MIM" id="604082">
    <property type="type" value="gene"/>
</dbReference>
<dbReference type="neXtProt" id="NX_P52738"/>
<dbReference type="OpenTargets" id="ENSG00000196387"/>
<dbReference type="PharmGKB" id="PA37512"/>
<dbReference type="VEuPathDB" id="HostDB:ENSG00000196387"/>
<dbReference type="eggNOG" id="KOG1721">
    <property type="taxonomic scope" value="Eukaryota"/>
</dbReference>
<dbReference type="GeneTree" id="ENSGT00940000163022"/>
<dbReference type="HOGENOM" id="CLU_002678_0_9_1"/>
<dbReference type="InParanoid" id="P52738"/>
<dbReference type="OMA" id="KEGWKCE"/>
<dbReference type="OrthoDB" id="6077919at2759"/>
<dbReference type="PAN-GO" id="P52738">
    <property type="GO annotations" value="4 GO annotations based on evolutionary models"/>
</dbReference>
<dbReference type="PhylomeDB" id="P52738"/>
<dbReference type="TreeFam" id="TF337055"/>
<dbReference type="PathwayCommons" id="P52738"/>
<dbReference type="Reactome" id="R-HSA-212436">
    <property type="pathway name" value="Generic Transcription Pathway"/>
</dbReference>
<dbReference type="SignaLink" id="P52738"/>
<dbReference type="SIGNOR" id="P52738"/>
<dbReference type="BioGRID-ORCS" id="7699">
    <property type="hits" value="7 hits in 1171 CRISPR screens"/>
</dbReference>
<dbReference type="ChiTaRS" id="ZNF140">
    <property type="organism name" value="human"/>
</dbReference>
<dbReference type="GenomeRNAi" id="7699"/>
<dbReference type="Pharos" id="P52738">
    <property type="development level" value="Tdark"/>
</dbReference>
<dbReference type="PRO" id="PR:P52738"/>
<dbReference type="Proteomes" id="UP000005640">
    <property type="component" value="Chromosome 12"/>
</dbReference>
<dbReference type="RNAct" id="P52738">
    <property type="molecule type" value="protein"/>
</dbReference>
<dbReference type="Bgee" id="ENSG00000196387">
    <property type="expression patterns" value="Expressed in primordial germ cell in gonad and 174 other cell types or tissues"/>
</dbReference>
<dbReference type="ExpressionAtlas" id="P52738">
    <property type="expression patterns" value="baseline and differential"/>
</dbReference>
<dbReference type="GO" id="GO:0005634">
    <property type="term" value="C:nucleus"/>
    <property type="evidence" value="ECO:0000318"/>
    <property type="project" value="GO_Central"/>
</dbReference>
<dbReference type="GO" id="GO:0000981">
    <property type="term" value="F:DNA-binding transcription factor activity, RNA polymerase II-specific"/>
    <property type="evidence" value="ECO:0000318"/>
    <property type="project" value="GO_Central"/>
</dbReference>
<dbReference type="GO" id="GO:0001227">
    <property type="term" value="F:DNA-binding transcription repressor activity, RNA polymerase II-specific"/>
    <property type="evidence" value="ECO:0000314"/>
    <property type="project" value="NTNU_SB"/>
</dbReference>
<dbReference type="GO" id="GO:0000978">
    <property type="term" value="F:RNA polymerase II cis-regulatory region sequence-specific DNA binding"/>
    <property type="evidence" value="ECO:0000318"/>
    <property type="project" value="GO_Central"/>
</dbReference>
<dbReference type="GO" id="GO:0043565">
    <property type="term" value="F:sequence-specific DNA binding"/>
    <property type="evidence" value="ECO:0000314"/>
    <property type="project" value="NTNU_SB"/>
</dbReference>
<dbReference type="GO" id="GO:1990837">
    <property type="term" value="F:sequence-specific double-stranded DNA binding"/>
    <property type="evidence" value="ECO:0000314"/>
    <property type="project" value="ARUK-UCL"/>
</dbReference>
<dbReference type="GO" id="GO:0008270">
    <property type="term" value="F:zinc ion binding"/>
    <property type="evidence" value="ECO:0007669"/>
    <property type="project" value="UniProtKB-KW"/>
</dbReference>
<dbReference type="GO" id="GO:0000122">
    <property type="term" value="P:negative regulation of transcription by RNA polymerase II"/>
    <property type="evidence" value="ECO:0000314"/>
    <property type="project" value="NTNU_SB"/>
</dbReference>
<dbReference type="GO" id="GO:0006357">
    <property type="term" value="P:regulation of transcription by RNA polymerase II"/>
    <property type="evidence" value="ECO:0000318"/>
    <property type="project" value="GO_Central"/>
</dbReference>
<dbReference type="CDD" id="cd07765">
    <property type="entry name" value="KRAB_A-box"/>
    <property type="match status" value="1"/>
</dbReference>
<dbReference type="FunFam" id="3.30.160.60:FF:000424">
    <property type="entry name" value="Zinc finger protein 140"/>
    <property type="match status" value="1"/>
</dbReference>
<dbReference type="FunFam" id="3.30.160.60:FF:002150">
    <property type="entry name" value="Zinc finger protein 140"/>
    <property type="match status" value="1"/>
</dbReference>
<dbReference type="FunFam" id="3.30.160.60:FF:001089">
    <property type="entry name" value="zinc finger protein 140 isoform X2"/>
    <property type="match status" value="1"/>
</dbReference>
<dbReference type="FunFam" id="3.30.160.60:FF:001307">
    <property type="entry name" value="zinc finger protein 140 isoform X3"/>
    <property type="match status" value="1"/>
</dbReference>
<dbReference type="FunFam" id="3.30.160.60:FF:001762">
    <property type="entry name" value="zinc finger protein 140 isoform X3"/>
    <property type="match status" value="1"/>
</dbReference>
<dbReference type="FunFam" id="3.30.160.60:FF:000352">
    <property type="entry name" value="zinc finger protein 3 homolog"/>
    <property type="match status" value="1"/>
</dbReference>
<dbReference type="FunFam" id="3.30.160.60:FF:002254">
    <property type="entry name" value="Zinc finger protein 540"/>
    <property type="match status" value="1"/>
</dbReference>
<dbReference type="FunFam" id="3.30.160.60:FF:000384">
    <property type="entry name" value="Zinc finger protein 550"/>
    <property type="match status" value="1"/>
</dbReference>
<dbReference type="FunFam" id="3.30.160.60:FF:001713">
    <property type="entry name" value="Zinc finger protein 619"/>
    <property type="match status" value="1"/>
</dbReference>
<dbReference type="FunFam" id="3.30.160.60:FF:000953">
    <property type="entry name" value="Zinc finger protein 691"/>
    <property type="match status" value="1"/>
</dbReference>
<dbReference type="Gene3D" id="6.10.140.140">
    <property type="match status" value="1"/>
</dbReference>
<dbReference type="Gene3D" id="3.30.160.60">
    <property type="entry name" value="Classic Zinc Finger"/>
    <property type="match status" value="10"/>
</dbReference>
<dbReference type="InterPro" id="IPR001909">
    <property type="entry name" value="KRAB"/>
</dbReference>
<dbReference type="InterPro" id="IPR036051">
    <property type="entry name" value="KRAB_dom_sf"/>
</dbReference>
<dbReference type="InterPro" id="IPR050527">
    <property type="entry name" value="Snail/Krueppel_Znf"/>
</dbReference>
<dbReference type="InterPro" id="IPR036236">
    <property type="entry name" value="Znf_C2H2_sf"/>
</dbReference>
<dbReference type="InterPro" id="IPR013087">
    <property type="entry name" value="Znf_C2H2_type"/>
</dbReference>
<dbReference type="PANTHER" id="PTHR24388:SF96">
    <property type="entry name" value="GENE, 32687-RELATED"/>
    <property type="match status" value="1"/>
</dbReference>
<dbReference type="PANTHER" id="PTHR24388">
    <property type="entry name" value="ZINC FINGER PROTEIN"/>
    <property type="match status" value="1"/>
</dbReference>
<dbReference type="Pfam" id="PF01352">
    <property type="entry name" value="KRAB"/>
    <property type="match status" value="1"/>
</dbReference>
<dbReference type="Pfam" id="PF00096">
    <property type="entry name" value="zf-C2H2"/>
    <property type="match status" value="8"/>
</dbReference>
<dbReference type="Pfam" id="PF13912">
    <property type="entry name" value="zf-C2H2_6"/>
    <property type="match status" value="1"/>
</dbReference>
<dbReference type="SMART" id="SM00349">
    <property type="entry name" value="KRAB"/>
    <property type="match status" value="1"/>
</dbReference>
<dbReference type="SMART" id="SM00355">
    <property type="entry name" value="ZnF_C2H2"/>
    <property type="match status" value="10"/>
</dbReference>
<dbReference type="SUPFAM" id="SSF57667">
    <property type="entry name" value="beta-beta-alpha zinc fingers"/>
    <property type="match status" value="6"/>
</dbReference>
<dbReference type="SUPFAM" id="SSF109640">
    <property type="entry name" value="KRAB domain (Kruppel-associated box)"/>
    <property type="match status" value="1"/>
</dbReference>
<dbReference type="PROSITE" id="PS50805">
    <property type="entry name" value="KRAB"/>
    <property type="match status" value="1"/>
</dbReference>
<dbReference type="PROSITE" id="PS00028">
    <property type="entry name" value="ZINC_FINGER_C2H2_1"/>
    <property type="match status" value="10"/>
</dbReference>
<dbReference type="PROSITE" id="PS50157">
    <property type="entry name" value="ZINC_FINGER_C2H2_2"/>
    <property type="match status" value="10"/>
</dbReference>
<accession>P52738</accession>
<accession>D3DXJ3</accession>
<accession>Q05CP6</accession>
<accession>Q8IV75</accession>
<protein>
    <recommendedName>
        <fullName>Zinc finger protein 140</fullName>
    </recommendedName>
</protein>
<feature type="chain" id="PRO_0000047423" description="Zinc finger protein 140">
    <location>
        <begin position="1"/>
        <end position="457"/>
    </location>
</feature>
<feature type="domain" description="KRAB" evidence="2">
    <location>
        <begin position="6"/>
        <end position="77"/>
    </location>
</feature>
<feature type="zinc finger region" description="C2H2-type 1" evidence="1">
    <location>
        <begin position="161"/>
        <end position="183"/>
    </location>
</feature>
<feature type="zinc finger region" description="C2H2-type 2" evidence="1">
    <location>
        <begin position="189"/>
        <end position="211"/>
    </location>
</feature>
<feature type="zinc finger region" description="C2H2-type 3" evidence="1">
    <location>
        <begin position="217"/>
        <end position="239"/>
    </location>
</feature>
<feature type="zinc finger region" description="C2H2-type 4" evidence="1">
    <location>
        <begin position="245"/>
        <end position="267"/>
    </location>
</feature>
<feature type="zinc finger region" description="C2H2-type 5" evidence="1">
    <location>
        <begin position="273"/>
        <end position="295"/>
    </location>
</feature>
<feature type="zinc finger region" description="C2H2-type 6" evidence="1">
    <location>
        <begin position="301"/>
        <end position="323"/>
    </location>
</feature>
<feature type="zinc finger region" description="C2H2-type 7" evidence="1">
    <location>
        <begin position="329"/>
        <end position="351"/>
    </location>
</feature>
<feature type="zinc finger region" description="C2H2-type 8" evidence="1">
    <location>
        <begin position="357"/>
        <end position="379"/>
    </location>
</feature>
<feature type="zinc finger region" description="C2H2-type 9" evidence="1">
    <location>
        <begin position="385"/>
        <end position="407"/>
    </location>
</feature>
<feature type="zinc finger region" description="C2H2-type 10" evidence="1">
    <location>
        <begin position="413"/>
        <end position="435"/>
    </location>
</feature>
<feature type="splice variant" id="VSP_056436" description="In isoform 2." evidence="3 4">
    <location>
        <begin position="1"/>
        <end position="103"/>
    </location>
</feature>
<feature type="sequence variant" id="VAR_046562" description="In dbSNP:rs2229373.">
    <original>A</original>
    <variation>V</variation>
    <location>
        <position position="386"/>
    </location>
</feature>
<feature type="sequence conflict" description="In Ref. 1; AAC50262." evidence="5" ref="1">
    <original>F</original>
    <variation>L</variation>
    <location>
        <position position="338"/>
    </location>
</feature>
<name>ZN140_HUMAN</name>
<sequence>MSQGSVTFRDVAIDFSQEEWKWLQPAQRDLYRCVMLENYGHLVSLGLSISKPDVVSLLEQGKEPWLGKREVKRDLFSVSESSGEIKDFSPKNVIYDDSSQYLIMERILSQGPVYSSFKGGWKCKDHTEMLQENQGCIRKVTVSHQEALAQHMNISTVERPYGCHECGKTFGRRFSLVLHQRTHTGEKPYACKECGKTFSQISNLVKHQMIHTGKKPHECKDCNKTFSYLSFLIEHQRTHTGEKPYECTECGKAFSRASNLTRHQRIHIGKKQYICRKCGKAFSSGSELIRHQITHTGEKPYECIECGKAFRRFSHLTRHQSIHTTKTPYECNECRKAFRCHSFLIKHQRIHAGEKLYECDECGKVFTWHASLIQHTKSHTGEKPYACAECDKAFSRSFSLILHQRTHTGEKPYVCKVCNKSFSWSSNLAKHQRTHTLDNPYEYENSFNYHSFLTEHQ</sequence>
<evidence type="ECO:0000255" key="1">
    <source>
        <dbReference type="PROSITE-ProRule" id="PRU00042"/>
    </source>
</evidence>
<evidence type="ECO:0000255" key="2">
    <source>
        <dbReference type="PROSITE-ProRule" id="PRU00119"/>
    </source>
</evidence>
<evidence type="ECO:0000303" key="3">
    <source>
    </source>
</evidence>
<evidence type="ECO:0000303" key="4">
    <source>
    </source>
</evidence>
<evidence type="ECO:0000305" key="5"/>
<proteinExistence type="evidence at protein level"/>
<organism>
    <name type="scientific">Homo sapiens</name>
    <name type="common">Human</name>
    <dbReference type="NCBI Taxonomy" id="9606"/>
    <lineage>
        <taxon>Eukaryota</taxon>
        <taxon>Metazoa</taxon>
        <taxon>Chordata</taxon>
        <taxon>Craniata</taxon>
        <taxon>Vertebrata</taxon>
        <taxon>Euteleostomi</taxon>
        <taxon>Mammalia</taxon>
        <taxon>Eutheria</taxon>
        <taxon>Euarchontoglires</taxon>
        <taxon>Primates</taxon>
        <taxon>Haplorrhini</taxon>
        <taxon>Catarrhini</taxon>
        <taxon>Hominidae</taxon>
        <taxon>Homo</taxon>
    </lineage>
</organism>